<gene>
    <name type="ordered locus">At4g05080</name>
    <name type="ORF">T32N4.2</name>
</gene>
<feature type="chain" id="PRO_0000283240" description="F-box/kelch-repeat protein At4g05080">
    <location>
        <begin position="1"/>
        <end position="391"/>
    </location>
</feature>
<feature type="domain" description="F-box">
    <location>
        <begin position="2"/>
        <end position="49"/>
    </location>
</feature>
<feature type="repeat" description="Kelch 1">
    <location>
        <begin position="100"/>
        <end position="143"/>
    </location>
</feature>
<feature type="repeat" description="Kelch 2">
    <location>
        <begin position="144"/>
        <end position="194"/>
    </location>
</feature>
<feature type="region of interest" description="Disordered" evidence="1">
    <location>
        <begin position="369"/>
        <end position="391"/>
    </location>
</feature>
<feature type="compositionally biased region" description="Basic residues" evidence="1">
    <location>
        <begin position="369"/>
        <end position="385"/>
    </location>
</feature>
<accession>Q9S9T0</accession>
<sequence>MTMMFDLTQDLVKEILSRVPITSLGAVRSTCKGWNALSKDRILCKAKPKQQFHQGFMLSDYRLRSMRFNISGTFKENGEEFVNLSVKEIGNFLNKVEISHMYYCGGILLCVTTDTRLVIWNPYLGQIRWIQLKTETMYSTFCLRYDNNKNHKILRFLDNKQGSYEIYDLKSYSWRAFDVIPKWDIDDDGQSASVKGNTYFRTIDETPNLLICFDFTAERFGKLLDPPFQHGWMSLSWVREEKLVALYQHLDTSMIEIWITTKIEPNALSWTSFLKCYIEQLIALDFWFDIDYNNFFIDEEKKLAVVIDKVESEDCKRSNSHINSYIIGDDGYLKKMNSLGNTARSYTAIMLSSCYVSSLVQIDDPIARRRRRERNSKRKEKKRKGTTNNKV</sequence>
<evidence type="ECO:0000256" key="1">
    <source>
        <dbReference type="SAM" id="MobiDB-lite"/>
    </source>
</evidence>
<name>FBK80_ARATH</name>
<proteinExistence type="evidence at transcript level"/>
<protein>
    <recommendedName>
        <fullName>F-box/kelch-repeat protein At4g05080</fullName>
    </recommendedName>
</protein>
<dbReference type="EMBL" id="AF162444">
    <property type="protein sequence ID" value="AAD48970.1"/>
    <property type="molecule type" value="Genomic_DNA"/>
</dbReference>
<dbReference type="EMBL" id="AL161502">
    <property type="protein sequence ID" value="CAB81050.1"/>
    <property type="molecule type" value="Genomic_DNA"/>
</dbReference>
<dbReference type="EMBL" id="CP002687">
    <property type="protein sequence ID" value="AEE82475.1"/>
    <property type="molecule type" value="Genomic_DNA"/>
</dbReference>
<dbReference type="EMBL" id="DQ056644">
    <property type="protein sequence ID" value="AAY78792.1"/>
    <property type="molecule type" value="mRNA"/>
</dbReference>
<dbReference type="PIR" id="H85063">
    <property type="entry name" value="H85063"/>
</dbReference>
<dbReference type="RefSeq" id="NP_567289.1">
    <property type="nucleotide sequence ID" value="NM_116747.1"/>
</dbReference>
<dbReference type="SMR" id="Q9S9T0"/>
<dbReference type="FunCoup" id="Q9S9T0">
    <property type="interactions" value="1"/>
</dbReference>
<dbReference type="STRING" id="3702.Q9S9T0"/>
<dbReference type="PaxDb" id="3702-AT4G05080.1"/>
<dbReference type="EnsemblPlants" id="AT4G05080.1">
    <property type="protein sequence ID" value="AT4G05080.1"/>
    <property type="gene ID" value="AT4G05080"/>
</dbReference>
<dbReference type="GeneID" id="825852"/>
<dbReference type="Gramene" id="AT4G05080.1">
    <property type="protein sequence ID" value="AT4G05080.1"/>
    <property type="gene ID" value="AT4G05080"/>
</dbReference>
<dbReference type="KEGG" id="ath:AT4G05080"/>
<dbReference type="Araport" id="AT4G05080"/>
<dbReference type="TAIR" id="AT4G05080"/>
<dbReference type="HOGENOM" id="CLU_034692_0_0_1"/>
<dbReference type="InParanoid" id="Q9S9T0"/>
<dbReference type="OMA" id="MIEIWIT"/>
<dbReference type="OrthoDB" id="1867629at2759"/>
<dbReference type="PhylomeDB" id="Q9S9T0"/>
<dbReference type="PRO" id="PR:Q9S9T0"/>
<dbReference type="Proteomes" id="UP000006548">
    <property type="component" value="Chromosome 4"/>
</dbReference>
<dbReference type="ExpressionAtlas" id="Q9S9T0">
    <property type="expression patterns" value="differential"/>
</dbReference>
<dbReference type="CDD" id="cd22157">
    <property type="entry name" value="F-box_AtFBW1-like"/>
    <property type="match status" value="1"/>
</dbReference>
<dbReference type="Gene3D" id="1.20.1280.50">
    <property type="match status" value="1"/>
</dbReference>
<dbReference type="InterPro" id="IPR006527">
    <property type="entry name" value="F-box-assoc_dom_typ1"/>
</dbReference>
<dbReference type="InterPro" id="IPR017451">
    <property type="entry name" value="F-box-assoc_interact_dom"/>
</dbReference>
<dbReference type="InterPro" id="IPR036047">
    <property type="entry name" value="F-box-like_dom_sf"/>
</dbReference>
<dbReference type="InterPro" id="IPR001810">
    <property type="entry name" value="F-box_dom"/>
</dbReference>
<dbReference type="InterPro" id="IPR050796">
    <property type="entry name" value="SCF_F-box_component"/>
</dbReference>
<dbReference type="NCBIfam" id="TIGR01640">
    <property type="entry name" value="F_box_assoc_1"/>
    <property type="match status" value="1"/>
</dbReference>
<dbReference type="PANTHER" id="PTHR31672">
    <property type="entry name" value="BNACNNG10540D PROTEIN"/>
    <property type="match status" value="1"/>
</dbReference>
<dbReference type="PANTHER" id="PTHR31672:SF13">
    <property type="entry name" value="F-BOX PROTEIN CPR30-LIKE"/>
    <property type="match status" value="1"/>
</dbReference>
<dbReference type="Pfam" id="PF00646">
    <property type="entry name" value="F-box"/>
    <property type="match status" value="1"/>
</dbReference>
<dbReference type="Pfam" id="PF07734">
    <property type="entry name" value="FBA_1"/>
    <property type="match status" value="1"/>
</dbReference>
<dbReference type="SMART" id="SM00256">
    <property type="entry name" value="FBOX"/>
    <property type="match status" value="1"/>
</dbReference>
<dbReference type="SUPFAM" id="SSF81383">
    <property type="entry name" value="F-box domain"/>
    <property type="match status" value="1"/>
</dbReference>
<organism>
    <name type="scientific">Arabidopsis thaliana</name>
    <name type="common">Mouse-ear cress</name>
    <dbReference type="NCBI Taxonomy" id="3702"/>
    <lineage>
        <taxon>Eukaryota</taxon>
        <taxon>Viridiplantae</taxon>
        <taxon>Streptophyta</taxon>
        <taxon>Embryophyta</taxon>
        <taxon>Tracheophyta</taxon>
        <taxon>Spermatophyta</taxon>
        <taxon>Magnoliopsida</taxon>
        <taxon>eudicotyledons</taxon>
        <taxon>Gunneridae</taxon>
        <taxon>Pentapetalae</taxon>
        <taxon>rosids</taxon>
        <taxon>malvids</taxon>
        <taxon>Brassicales</taxon>
        <taxon>Brassicaceae</taxon>
        <taxon>Camelineae</taxon>
        <taxon>Arabidopsis</taxon>
    </lineage>
</organism>
<reference key="1">
    <citation type="journal article" date="1999" name="Nature">
        <title>Sequence and analysis of chromosome 4 of the plant Arabidopsis thaliana.</title>
        <authorList>
            <person name="Mayer K.F.X."/>
            <person name="Schueller C."/>
            <person name="Wambutt R."/>
            <person name="Murphy G."/>
            <person name="Volckaert G."/>
            <person name="Pohl T."/>
            <person name="Duesterhoeft A."/>
            <person name="Stiekema W."/>
            <person name="Entian K.-D."/>
            <person name="Terryn N."/>
            <person name="Harris B."/>
            <person name="Ansorge W."/>
            <person name="Brandt P."/>
            <person name="Grivell L.A."/>
            <person name="Rieger M."/>
            <person name="Weichselgartner M."/>
            <person name="de Simone V."/>
            <person name="Obermaier B."/>
            <person name="Mache R."/>
            <person name="Mueller M."/>
            <person name="Kreis M."/>
            <person name="Delseny M."/>
            <person name="Puigdomenech P."/>
            <person name="Watson M."/>
            <person name="Schmidtheini T."/>
            <person name="Reichert B."/>
            <person name="Portetelle D."/>
            <person name="Perez-Alonso M."/>
            <person name="Boutry M."/>
            <person name="Bancroft I."/>
            <person name="Vos P."/>
            <person name="Hoheisel J."/>
            <person name="Zimmermann W."/>
            <person name="Wedler H."/>
            <person name="Ridley P."/>
            <person name="Langham S.-A."/>
            <person name="McCullagh B."/>
            <person name="Bilham L."/>
            <person name="Robben J."/>
            <person name="van der Schueren J."/>
            <person name="Grymonprez B."/>
            <person name="Chuang Y.-J."/>
            <person name="Vandenbussche F."/>
            <person name="Braeken M."/>
            <person name="Weltjens I."/>
            <person name="Voet M."/>
            <person name="Bastiaens I."/>
            <person name="Aert R."/>
            <person name="Defoor E."/>
            <person name="Weitzenegger T."/>
            <person name="Bothe G."/>
            <person name="Ramsperger U."/>
            <person name="Hilbert H."/>
            <person name="Braun M."/>
            <person name="Holzer E."/>
            <person name="Brandt A."/>
            <person name="Peters S."/>
            <person name="van Staveren M."/>
            <person name="Dirkse W."/>
            <person name="Mooijman P."/>
            <person name="Klein Lankhorst R."/>
            <person name="Rose M."/>
            <person name="Hauf J."/>
            <person name="Koetter P."/>
            <person name="Berneiser S."/>
            <person name="Hempel S."/>
            <person name="Feldpausch M."/>
            <person name="Lamberth S."/>
            <person name="Van den Daele H."/>
            <person name="De Keyser A."/>
            <person name="Buysshaert C."/>
            <person name="Gielen J."/>
            <person name="Villarroel R."/>
            <person name="De Clercq R."/>
            <person name="van Montagu M."/>
            <person name="Rogers J."/>
            <person name="Cronin A."/>
            <person name="Quail M.A."/>
            <person name="Bray-Allen S."/>
            <person name="Clark L."/>
            <person name="Doggett J."/>
            <person name="Hall S."/>
            <person name="Kay M."/>
            <person name="Lennard N."/>
            <person name="McLay K."/>
            <person name="Mayes R."/>
            <person name="Pettett A."/>
            <person name="Rajandream M.A."/>
            <person name="Lyne M."/>
            <person name="Benes V."/>
            <person name="Rechmann S."/>
            <person name="Borkova D."/>
            <person name="Bloecker H."/>
            <person name="Scharfe M."/>
            <person name="Grimm M."/>
            <person name="Loehnert T.-H."/>
            <person name="Dose S."/>
            <person name="de Haan M."/>
            <person name="Maarse A.C."/>
            <person name="Schaefer M."/>
            <person name="Mueller-Auer S."/>
            <person name="Gabel C."/>
            <person name="Fuchs M."/>
            <person name="Fartmann B."/>
            <person name="Granderath K."/>
            <person name="Dauner D."/>
            <person name="Herzl A."/>
            <person name="Neumann S."/>
            <person name="Argiriou A."/>
            <person name="Vitale D."/>
            <person name="Liguori R."/>
            <person name="Piravandi E."/>
            <person name="Massenet O."/>
            <person name="Quigley F."/>
            <person name="Clabauld G."/>
            <person name="Muendlein A."/>
            <person name="Felber R."/>
            <person name="Schnabl S."/>
            <person name="Hiller R."/>
            <person name="Schmidt W."/>
            <person name="Lecharny A."/>
            <person name="Aubourg S."/>
            <person name="Chefdor F."/>
            <person name="Cooke R."/>
            <person name="Berger C."/>
            <person name="Monfort A."/>
            <person name="Casacuberta E."/>
            <person name="Gibbons T."/>
            <person name="Weber N."/>
            <person name="Vandenbol M."/>
            <person name="Bargues M."/>
            <person name="Terol J."/>
            <person name="Torres A."/>
            <person name="Perez-Perez A."/>
            <person name="Purnelle B."/>
            <person name="Bent E."/>
            <person name="Johnson S."/>
            <person name="Tacon D."/>
            <person name="Jesse T."/>
            <person name="Heijnen L."/>
            <person name="Schwarz S."/>
            <person name="Scholler P."/>
            <person name="Heber S."/>
            <person name="Francs P."/>
            <person name="Bielke C."/>
            <person name="Frishman D."/>
            <person name="Haase D."/>
            <person name="Lemcke K."/>
            <person name="Mewes H.-W."/>
            <person name="Stocker S."/>
            <person name="Zaccaria P."/>
            <person name="Bevan M."/>
            <person name="Wilson R.K."/>
            <person name="de la Bastide M."/>
            <person name="Habermann K."/>
            <person name="Parnell L."/>
            <person name="Dedhia N."/>
            <person name="Gnoj L."/>
            <person name="Schutz K."/>
            <person name="Huang E."/>
            <person name="Spiegel L."/>
            <person name="Sekhon M."/>
            <person name="Murray J."/>
            <person name="Sheet P."/>
            <person name="Cordes M."/>
            <person name="Abu-Threideh J."/>
            <person name="Stoneking T."/>
            <person name="Kalicki J."/>
            <person name="Graves T."/>
            <person name="Harmon G."/>
            <person name="Edwards J."/>
            <person name="Latreille P."/>
            <person name="Courtney L."/>
            <person name="Cloud J."/>
            <person name="Abbott A."/>
            <person name="Scott K."/>
            <person name="Johnson D."/>
            <person name="Minx P."/>
            <person name="Bentley D."/>
            <person name="Fulton B."/>
            <person name="Miller N."/>
            <person name="Greco T."/>
            <person name="Kemp K."/>
            <person name="Kramer J."/>
            <person name="Fulton L."/>
            <person name="Mardis E."/>
            <person name="Dante M."/>
            <person name="Pepin K."/>
            <person name="Hillier L.W."/>
            <person name="Nelson J."/>
            <person name="Spieth J."/>
            <person name="Ryan E."/>
            <person name="Andrews S."/>
            <person name="Geisel C."/>
            <person name="Layman D."/>
            <person name="Du H."/>
            <person name="Ali J."/>
            <person name="Berghoff A."/>
            <person name="Jones K."/>
            <person name="Drone K."/>
            <person name="Cotton M."/>
            <person name="Joshu C."/>
            <person name="Antonoiu B."/>
            <person name="Zidanic M."/>
            <person name="Strong C."/>
            <person name="Sun H."/>
            <person name="Lamar B."/>
            <person name="Yordan C."/>
            <person name="Ma P."/>
            <person name="Zhong J."/>
            <person name="Preston R."/>
            <person name="Vil D."/>
            <person name="Shekher M."/>
            <person name="Matero A."/>
            <person name="Shah R."/>
            <person name="Swaby I.K."/>
            <person name="O'Shaughnessy A."/>
            <person name="Rodriguez M."/>
            <person name="Hoffman J."/>
            <person name="Till S."/>
            <person name="Granat S."/>
            <person name="Shohdy N."/>
            <person name="Hasegawa A."/>
            <person name="Hameed A."/>
            <person name="Lodhi M."/>
            <person name="Johnson A."/>
            <person name="Chen E."/>
            <person name="Marra M.A."/>
            <person name="Martienssen R."/>
            <person name="McCombie W.R."/>
        </authorList>
    </citation>
    <scope>NUCLEOTIDE SEQUENCE [LARGE SCALE GENOMIC DNA]</scope>
    <source>
        <strain>cv. Columbia</strain>
    </source>
</reference>
<reference key="2">
    <citation type="journal article" date="2017" name="Plant J.">
        <title>Araport11: a complete reannotation of the Arabidopsis thaliana reference genome.</title>
        <authorList>
            <person name="Cheng C.Y."/>
            <person name="Krishnakumar V."/>
            <person name="Chan A.P."/>
            <person name="Thibaud-Nissen F."/>
            <person name="Schobel S."/>
            <person name="Town C.D."/>
        </authorList>
    </citation>
    <scope>GENOME REANNOTATION</scope>
    <source>
        <strain>cv. Columbia</strain>
    </source>
</reference>
<reference key="3">
    <citation type="submission" date="2005-05" db="EMBL/GenBank/DDBJ databases">
        <authorList>
            <person name="Underwood B.A."/>
            <person name="Xiao Y.-L."/>
            <person name="Moskal W.A. Jr."/>
            <person name="Monaghan E.L."/>
            <person name="Wang W."/>
            <person name="Redman J.C."/>
            <person name="Wu H.C."/>
            <person name="Utterback T."/>
            <person name="Town C.D."/>
        </authorList>
    </citation>
    <scope>NUCLEOTIDE SEQUENCE [LARGE SCALE MRNA]</scope>
    <source>
        <strain>cv. Columbia</strain>
    </source>
</reference>
<keyword id="KW-0880">Kelch repeat</keyword>
<keyword id="KW-1185">Reference proteome</keyword>
<keyword id="KW-0677">Repeat</keyword>